<reference key="1">
    <citation type="submission" date="2002-09" db="EMBL/GenBank/DDBJ databases">
        <title>Phylogenetic relationships among the major lineages of Asparagales based on a large chloroplast data set.</title>
        <authorList>
            <person name="McPherson M.A."/>
            <person name="Rai H.S."/>
            <person name="Wong W.A."/>
            <person name="Graham S.W."/>
        </authorList>
    </citation>
    <scope>NUCLEOTIDE SEQUENCE [GENOMIC DNA]</scope>
</reference>
<feature type="chain" id="PRO_0000219699" description="Photosystem II reaction center protein L">
    <location>
        <begin position="1"/>
        <end position="38"/>
    </location>
</feature>
<feature type="transmembrane region" description="Helical" evidence="1">
    <location>
        <begin position="17"/>
        <end position="37"/>
    </location>
</feature>
<organism>
    <name type="scientific">Coelogyne cristata</name>
    <name type="common">Orchid</name>
    <name type="synonym">Cymbidium speciosissimum</name>
    <dbReference type="NCBI Taxonomy" id="38221"/>
    <lineage>
        <taxon>Eukaryota</taxon>
        <taxon>Viridiplantae</taxon>
        <taxon>Streptophyta</taxon>
        <taxon>Embryophyta</taxon>
        <taxon>Tracheophyta</taxon>
        <taxon>Spermatophyta</taxon>
        <taxon>Magnoliopsida</taxon>
        <taxon>Liliopsida</taxon>
        <taxon>Asparagales</taxon>
        <taxon>Orchidaceae</taxon>
        <taxon>Epidendroideae</taxon>
        <taxon>Arethuseae</taxon>
        <taxon>Coelogyninae</taxon>
        <taxon>Coelogyne</taxon>
    </lineage>
</organism>
<protein>
    <recommendedName>
        <fullName evidence="1">Photosystem II reaction center protein L</fullName>
        <shortName evidence="1">PSII-L</shortName>
    </recommendedName>
</protein>
<sequence length="38" mass="4497">MTQSNPNEQNVELNRTSLYWGLLLIFVLAVLFSNYFFN</sequence>
<proteinExistence type="inferred from homology"/>
<dbReference type="EMBL" id="AY147570">
    <property type="protein sequence ID" value="AAN32382.1"/>
    <property type="molecule type" value="Genomic_DNA"/>
</dbReference>
<dbReference type="SMR" id="Q67HH2"/>
<dbReference type="GO" id="GO:0009535">
    <property type="term" value="C:chloroplast thylakoid membrane"/>
    <property type="evidence" value="ECO:0007669"/>
    <property type="project" value="UniProtKB-SubCell"/>
</dbReference>
<dbReference type="GO" id="GO:0009539">
    <property type="term" value="C:photosystem II reaction center"/>
    <property type="evidence" value="ECO:0007669"/>
    <property type="project" value="InterPro"/>
</dbReference>
<dbReference type="GO" id="GO:0015979">
    <property type="term" value="P:photosynthesis"/>
    <property type="evidence" value="ECO:0007669"/>
    <property type="project" value="UniProtKB-UniRule"/>
</dbReference>
<dbReference type="HAMAP" id="MF_01317">
    <property type="entry name" value="PSII_PsbL"/>
    <property type="match status" value="1"/>
</dbReference>
<dbReference type="InterPro" id="IPR003372">
    <property type="entry name" value="PSII_PsbL"/>
</dbReference>
<dbReference type="InterPro" id="IPR037266">
    <property type="entry name" value="PSII_PsbL_sf"/>
</dbReference>
<dbReference type="NCBIfam" id="NF001972">
    <property type="entry name" value="PRK00753.1"/>
    <property type="match status" value="1"/>
</dbReference>
<dbReference type="Pfam" id="PF02419">
    <property type="entry name" value="PsbL"/>
    <property type="match status" value="1"/>
</dbReference>
<dbReference type="SUPFAM" id="SSF161017">
    <property type="entry name" value="Photosystem II reaction center protein L, PsbL"/>
    <property type="match status" value="1"/>
</dbReference>
<accession>Q67HH2</accession>
<comment type="function">
    <text evidence="1">One of the components of the core complex of photosystem II (PSII). PSII is a light-driven water:plastoquinone oxidoreductase that uses light energy to abstract electrons from H(2)O, generating O(2) and a proton gradient subsequently used for ATP formation. It consists of a core antenna complex that captures photons, and an electron transfer chain that converts photonic excitation into a charge separation. This subunit is found at the monomer-monomer interface and is required for correct PSII assembly and/or dimerization.</text>
</comment>
<comment type="subunit">
    <text evidence="1">PSII is composed of 1 copy each of membrane proteins PsbA, PsbB, PsbC, PsbD, PsbE, PsbF, PsbH, PsbI, PsbJ, PsbK, PsbL, PsbM, PsbT, PsbX, PsbY, PsbZ, Psb30/Ycf12, at least 3 peripheral proteins of the oxygen-evolving complex and a large number of cofactors. It forms dimeric complexes.</text>
</comment>
<comment type="subcellular location">
    <subcellularLocation>
        <location evidence="1">Plastid</location>
        <location evidence="1">Chloroplast thylakoid membrane</location>
        <topology evidence="1">Single-pass membrane protein</topology>
    </subcellularLocation>
</comment>
<comment type="similarity">
    <text evidence="1">Belongs to the PsbL family.</text>
</comment>
<gene>
    <name evidence="1" type="primary">psbL</name>
</gene>
<evidence type="ECO:0000255" key="1">
    <source>
        <dbReference type="HAMAP-Rule" id="MF_01317"/>
    </source>
</evidence>
<keyword id="KW-0150">Chloroplast</keyword>
<keyword id="KW-0472">Membrane</keyword>
<keyword id="KW-0602">Photosynthesis</keyword>
<keyword id="KW-0604">Photosystem II</keyword>
<keyword id="KW-0934">Plastid</keyword>
<keyword id="KW-0674">Reaction center</keyword>
<keyword id="KW-0793">Thylakoid</keyword>
<keyword id="KW-0812">Transmembrane</keyword>
<keyword id="KW-1133">Transmembrane helix</keyword>
<name>PSBL_COECR</name>
<geneLocation type="chloroplast"/>